<comment type="function">
    <text evidence="1">Involved in the heme biosynthesis. Catalyzes the aerobic oxidative decarboxylation of propionate groups of rings A and B of coproporphyrinogen-III to yield the vinyl groups in protoporphyrinogen-IX.</text>
</comment>
<comment type="catalytic activity">
    <reaction evidence="1">
        <text>coproporphyrinogen III + O2 + 2 H(+) = protoporphyrinogen IX + 2 CO2 + 2 H2O</text>
        <dbReference type="Rhea" id="RHEA:18257"/>
        <dbReference type="ChEBI" id="CHEBI:15377"/>
        <dbReference type="ChEBI" id="CHEBI:15378"/>
        <dbReference type="ChEBI" id="CHEBI:15379"/>
        <dbReference type="ChEBI" id="CHEBI:16526"/>
        <dbReference type="ChEBI" id="CHEBI:57307"/>
        <dbReference type="ChEBI" id="CHEBI:57309"/>
        <dbReference type="EC" id="1.3.3.3"/>
    </reaction>
</comment>
<comment type="cofactor">
    <cofactor evidence="1">
        <name>a divalent metal cation</name>
        <dbReference type="ChEBI" id="CHEBI:60240"/>
    </cofactor>
</comment>
<comment type="pathway">
    <text evidence="1">Porphyrin-containing compound metabolism; protoporphyrin-IX biosynthesis; protoporphyrinogen-IX from coproporphyrinogen-III (O2 route): step 1/1.</text>
</comment>
<comment type="subunit">
    <text evidence="1">Homodimer.</text>
</comment>
<comment type="subcellular location">
    <subcellularLocation>
        <location evidence="1">Cytoplasm</location>
    </subcellularLocation>
</comment>
<comment type="similarity">
    <text evidence="1">Belongs to the aerobic coproporphyrinogen-III oxidase family.</text>
</comment>
<reference key="1">
    <citation type="journal article" date="2005" name="J. Bacteriol.">
        <title>Completion of the genome sequence of Brucella abortus and comparison to the highly similar genomes of Brucella melitensis and Brucella suis.</title>
        <authorList>
            <person name="Halling S.M."/>
            <person name="Peterson-Burch B.D."/>
            <person name="Bricker B.J."/>
            <person name="Zuerner R.L."/>
            <person name="Qing Z."/>
            <person name="Li L.-L."/>
            <person name="Kapur V."/>
            <person name="Alt D.P."/>
            <person name="Olsen S.C."/>
        </authorList>
    </citation>
    <scope>NUCLEOTIDE SEQUENCE [LARGE SCALE GENOMIC DNA]</scope>
    <source>
        <strain>9-941</strain>
    </source>
</reference>
<gene>
    <name evidence="1" type="primary">hemF</name>
    <name type="ordered locus">BruAb1_1539</name>
</gene>
<keyword id="KW-0963">Cytoplasm</keyword>
<keyword id="KW-0350">Heme biosynthesis</keyword>
<keyword id="KW-0479">Metal-binding</keyword>
<keyword id="KW-0560">Oxidoreductase</keyword>
<keyword id="KW-0627">Porphyrin biosynthesis</keyword>
<protein>
    <recommendedName>
        <fullName evidence="1">Oxygen-dependent coproporphyrinogen-III oxidase</fullName>
        <shortName evidence="1">CPO</shortName>
        <shortName evidence="1">Coprogen oxidase</shortName>
        <shortName evidence="1">Coproporphyrinogenase</shortName>
        <ecNumber evidence="1">1.3.3.3</ecNumber>
    </recommendedName>
</protein>
<organism>
    <name type="scientific">Brucella abortus biovar 1 (strain 9-941)</name>
    <dbReference type="NCBI Taxonomy" id="262698"/>
    <lineage>
        <taxon>Bacteria</taxon>
        <taxon>Pseudomonadati</taxon>
        <taxon>Pseudomonadota</taxon>
        <taxon>Alphaproteobacteria</taxon>
        <taxon>Hyphomicrobiales</taxon>
        <taxon>Brucellaceae</taxon>
        <taxon>Brucella/Ochrobactrum group</taxon>
        <taxon>Brucella</taxon>
    </lineage>
</organism>
<proteinExistence type="inferred from homology"/>
<name>HEM6_BRUAB</name>
<feature type="chain" id="PRO_1000119788" description="Oxygen-dependent coproporphyrinogen-III oxidase">
    <location>
        <begin position="1"/>
        <end position="303"/>
    </location>
</feature>
<feature type="region of interest" description="Disordered" evidence="2">
    <location>
        <begin position="43"/>
        <end position="62"/>
    </location>
</feature>
<feature type="region of interest" description="Important for dimerization" evidence="1">
    <location>
        <begin position="268"/>
        <end position="303"/>
    </location>
</feature>
<feature type="compositionally biased region" description="Basic and acidic residues" evidence="2">
    <location>
        <begin position="48"/>
        <end position="62"/>
    </location>
</feature>
<feature type="active site" description="Proton donor" evidence="1">
    <location>
        <position position="130"/>
    </location>
</feature>
<feature type="binding site" evidence="1">
    <location>
        <position position="116"/>
    </location>
    <ligand>
        <name>substrate</name>
    </ligand>
</feature>
<feature type="binding site" evidence="1">
    <location>
        <position position="120"/>
    </location>
    <ligand>
        <name>a divalent metal cation</name>
        <dbReference type="ChEBI" id="CHEBI:60240"/>
    </ligand>
</feature>
<feature type="binding site" evidence="1">
    <location>
        <position position="130"/>
    </location>
    <ligand>
        <name>a divalent metal cation</name>
        <dbReference type="ChEBI" id="CHEBI:60240"/>
    </ligand>
</feature>
<feature type="binding site" evidence="1">
    <location>
        <begin position="132"/>
        <end position="134"/>
    </location>
    <ligand>
        <name>substrate</name>
    </ligand>
</feature>
<feature type="binding site" evidence="1">
    <location>
        <position position="168"/>
    </location>
    <ligand>
        <name>a divalent metal cation</name>
        <dbReference type="ChEBI" id="CHEBI:60240"/>
    </ligand>
</feature>
<feature type="binding site" evidence="1">
    <location>
        <position position="199"/>
    </location>
    <ligand>
        <name>a divalent metal cation</name>
        <dbReference type="ChEBI" id="CHEBI:60240"/>
    </ligand>
</feature>
<feature type="binding site" evidence="1">
    <location>
        <begin position="286"/>
        <end position="288"/>
    </location>
    <ligand>
        <name>substrate</name>
    </ligand>
</feature>
<feature type="site" description="Important for dimerization" evidence="1">
    <location>
        <position position="199"/>
    </location>
</feature>
<sequence length="303" mass="35111">MKREDIPAIIPADIEEKKKAAQSWFEELRDRICASYEQLEDELQGPLSDREPGRFVRTPWQKDDGNGGGVMSIMHGRVFEKVGVHVSTVHGEFSPEFRKQIPGAEEDPRYWASGISLIAHPQNPNVPAVHMNTRMIVTTRQWFAGGADLTPVLDRRRTQEDPDTLAFHKAFRFICEKHKDIVDYQRLKEWCDEYFFLPHRDEPRGIGGIFYDWLHSPEEKGGWDSDFAFTRDVGRGFSVVYPHLVRQNFNKDWTEADRDEQLIRRGRYVEFNLLYDRGTIFGLKTGGNMNAILSSMPPVVKWP</sequence>
<accession>Q57BW7</accession>
<dbReference type="EC" id="1.3.3.3" evidence="1"/>
<dbReference type="EMBL" id="AE017223">
    <property type="protein sequence ID" value="AAX74867.1"/>
    <property type="molecule type" value="Genomic_DNA"/>
</dbReference>
<dbReference type="RefSeq" id="WP_002964654.1">
    <property type="nucleotide sequence ID" value="NC_006932.1"/>
</dbReference>
<dbReference type="SMR" id="Q57BW7"/>
<dbReference type="EnsemblBacteria" id="AAX74867">
    <property type="protein sequence ID" value="AAX74867"/>
    <property type="gene ID" value="BruAb1_1539"/>
</dbReference>
<dbReference type="GeneID" id="97533266"/>
<dbReference type="KEGG" id="bmb:BruAb1_1539"/>
<dbReference type="HOGENOM" id="CLU_026169_0_1_5"/>
<dbReference type="UniPathway" id="UPA00251">
    <property type="reaction ID" value="UER00322"/>
</dbReference>
<dbReference type="Proteomes" id="UP000000540">
    <property type="component" value="Chromosome I"/>
</dbReference>
<dbReference type="GO" id="GO:0005737">
    <property type="term" value="C:cytoplasm"/>
    <property type="evidence" value="ECO:0007669"/>
    <property type="project" value="UniProtKB-SubCell"/>
</dbReference>
<dbReference type="GO" id="GO:0004109">
    <property type="term" value="F:coproporphyrinogen oxidase activity"/>
    <property type="evidence" value="ECO:0007669"/>
    <property type="project" value="UniProtKB-UniRule"/>
</dbReference>
<dbReference type="GO" id="GO:0046872">
    <property type="term" value="F:metal ion binding"/>
    <property type="evidence" value="ECO:0007669"/>
    <property type="project" value="UniProtKB-KW"/>
</dbReference>
<dbReference type="GO" id="GO:0042803">
    <property type="term" value="F:protein homodimerization activity"/>
    <property type="evidence" value="ECO:0000250"/>
    <property type="project" value="UniProtKB"/>
</dbReference>
<dbReference type="GO" id="GO:0006782">
    <property type="term" value="P:protoporphyrinogen IX biosynthetic process"/>
    <property type="evidence" value="ECO:0007669"/>
    <property type="project" value="UniProtKB-UniRule"/>
</dbReference>
<dbReference type="FunFam" id="3.40.1500.10:FF:000005">
    <property type="entry name" value="Oxygen-dependent coproporphyrinogen-III oxidase"/>
    <property type="match status" value="1"/>
</dbReference>
<dbReference type="Gene3D" id="3.40.1500.10">
    <property type="entry name" value="Coproporphyrinogen III oxidase, aerobic"/>
    <property type="match status" value="1"/>
</dbReference>
<dbReference type="HAMAP" id="MF_00333">
    <property type="entry name" value="Coprogen_oxidas"/>
    <property type="match status" value="1"/>
</dbReference>
<dbReference type="InterPro" id="IPR001260">
    <property type="entry name" value="Coprogen_oxidase_aer"/>
</dbReference>
<dbReference type="InterPro" id="IPR036406">
    <property type="entry name" value="Coprogen_oxidase_aer_sf"/>
</dbReference>
<dbReference type="InterPro" id="IPR018375">
    <property type="entry name" value="Coprogen_oxidase_CS"/>
</dbReference>
<dbReference type="NCBIfam" id="NF003727">
    <property type="entry name" value="PRK05330.1"/>
    <property type="match status" value="1"/>
</dbReference>
<dbReference type="PANTHER" id="PTHR10755">
    <property type="entry name" value="COPROPORPHYRINOGEN III OXIDASE, MITOCHONDRIAL"/>
    <property type="match status" value="1"/>
</dbReference>
<dbReference type="PANTHER" id="PTHR10755:SF0">
    <property type="entry name" value="OXYGEN-DEPENDENT COPROPORPHYRINOGEN-III OXIDASE, MITOCHONDRIAL"/>
    <property type="match status" value="1"/>
</dbReference>
<dbReference type="Pfam" id="PF01218">
    <property type="entry name" value="Coprogen_oxidas"/>
    <property type="match status" value="1"/>
</dbReference>
<dbReference type="PIRSF" id="PIRSF000166">
    <property type="entry name" value="Coproporphyri_ox"/>
    <property type="match status" value="1"/>
</dbReference>
<dbReference type="PRINTS" id="PR00073">
    <property type="entry name" value="COPRGNOXDASE"/>
</dbReference>
<dbReference type="SUPFAM" id="SSF102886">
    <property type="entry name" value="Coproporphyrinogen III oxidase"/>
    <property type="match status" value="1"/>
</dbReference>
<dbReference type="PROSITE" id="PS01021">
    <property type="entry name" value="COPROGEN_OXIDASE"/>
    <property type="match status" value="1"/>
</dbReference>
<evidence type="ECO:0000255" key="1">
    <source>
        <dbReference type="HAMAP-Rule" id="MF_00333"/>
    </source>
</evidence>
<evidence type="ECO:0000256" key="2">
    <source>
        <dbReference type="SAM" id="MobiDB-lite"/>
    </source>
</evidence>